<evidence type="ECO:0000255" key="1">
    <source>
        <dbReference type="HAMAP-Rule" id="MF_01437"/>
    </source>
</evidence>
<accession>Q0TGS6</accession>
<organism>
    <name type="scientific">Escherichia coli O6:K15:H31 (strain 536 / UPEC)</name>
    <dbReference type="NCBI Taxonomy" id="362663"/>
    <lineage>
        <taxon>Bacteria</taxon>
        <taxon>Pseudomonadati</taxon>
        <taxon>Pseudomonadota</taxon>
        <taxon>Gammaproteobacteria</taxon>
        <taxon>Enterobacterales</taxon>
        <taxon>Enterobacteriaceae</taxon>
        <taxon>Escherichia</taxon>
    </lineage>
</organism>
<protein>
    <recommendedName>
        <fullName evidence="1">CDP-diacylglycerol--glycerol-3-phosphate 3-phosphatidyltransferase</fullName>
        <ecNumber evidence="1">2.7.8.5</ecNumber>
    </recommendedName>
    <alternativeName>
        <fullName evidence="1">Phosphatidylglycerophosphate synthase</fullName>
        <shortName evidence="1">PGP synthase</shortName>
    </alternativeName>
</protein>
<gene>
    <name evidence="1" type="primary">pgsA</name>
    <name type="ordered locus">ECP_1852</name>
</gene>
<proteinExistence type="inferred from homology"/>
<name>PGSA_ECOL5</name>
<reference key="1">
    <citation type="journal article" date="2006" name="Mol. Microbiol.">
        <title>Role of pathogenicity island-associated integrases in the genome plasticity of uropathogenic Escherichia coli strain 536.</title>
        <authorList>
            <person name="Hochhut B."/>
            <person name="Wilde C."/>
            <person name="Balling G."/>
            <person name="Middendorf B."/>
            <person name="Dobrindt U."/>
            <person name="Brzuszkiewicz E."/>
            <person name="Gottschalk G."/>
            <person name="Carniel E."/>
            <person name="Hacker J."/>
        </authorList>
    </citation>
    <scope>NUCLEOTIDE SEQUENCE [LARGE SCALE GENOMIC DNA]</scope>
    <source>
        <strain>536 / UPEC</strain>
    </source>
</reference>
<feature type="chain" id="PRO_0000301863" description="CDP-diacylglycerol--glycerol-3-phosphate 3-phosphatidyltransferase">
    <location>
        <begin position="1"/>
        <end position="182"/>
    </location>
</feature>
<feature type="topological domain" description="Cytoplasmic" evidence="1">
    <location>
        <begin position="1"/>
        <end position="12"/>
    </location>
</feature>
<feature type="transmembrane region" description="Helical" evidence="1">
    <location>
        <begin position="13"/>
        <end position="37"/>
    </location>
</feature>
<feature type="topological domain" description="Periplasmic" evidence="1">
    <location>
        <begin position="38"/>
        <end position="60"/>
    </location>
</feature>
<feature type="transmembrane region" description="Helical" evidence="1">
    <location>
        <begin position="61"/>
        <end position="81"/>
    </location>
</feature>
<feature type="topological domain" description="Cytoplasmic" evidence="1">
    <location>
        <begin position="82"/>
        <end position="86"/>
    </location>
</feature>
<feature type="transmembrane region" description="Helical" evidence="1">
    <location>
        <begin position="87"/>
        <end position="107"/>
    </location>
</feature>
<feature type="topological domain" description="Periplasmic" evidence="1">
    <location>
        <begin position="108"/>
        <end position="145"/>
    </location>
</feature>
<feature type="transmembrane region" description="Helical" evidence="1">
    <location>
        <begin position="146"/>
        <end position="168"/>
    </location>
</feature>
<feature type="topological domain" description="Cytoplasmic" evidence="1">
    <location>
        <begin position="169"/>
        <end position="181"/>
    </location>
</feature>
<comment type="function">
    <text evidence="1">Catalyzes the conversion of cytidine diphosphate diacylglycerol (CDP-DG) and glycerol 3-phosphate into phosphatidylglycerol. Essential for the synthesis of anionic phospholipids, thereby playing a role in balancing the ratio of zwitterionic and anionic phospholipids, which is thought to be important for normal membrane function.</text>
</comment>
<comment type="catalytic activity">
    <reaction evidence="1">
        <text>a CDP-1,2-diacyl-sn-glycerol + sn-glycerol 3-phosphate = a 1,2-diacyl-sn-glycero-3-phospho-(1'-sn-glycero-3'-phosphate) + CMP + H(+)</text>
        <dbReference type="Rhea" id="RHEA:12593"/>
        <dbReference type="ChEBI" id="CHEBI:15378"/>
        <dbReference type="ChEBI" id="CHEBI:57597"/>
        <dbReference type="ChEBI" id="CHEBI:58332"/>
        <dbReference type="ChEBI" id="CHEBI:60110"/>
        <dbReference type="ChEBI" id="CHEBI:60377"/>
        <dbReference type="EC" id="2.7.8.5"/>
    </reaction>
</comment>
<comment type="pathway">
    <text evidence="1">Phospholipid metabolism; phosphatidylglycerol biosynthesis; phosphatidylglycerol from CDP-diacylglycerol: step 1/2.</text>
</comment>
<comment type="subcellular location">
    <subcellularLocation>
        <location evidence="1">Cell inner membrane</location>
        <topology evidence="1">Multi-pass membrane protein</topology>
    </subcellularLocation>
</comment>
<comment type="similarity">
    <text evidence="1">Belongs to the CDP-alcohol phosphatidyltransferase class-I family.</text>
</comment>
<keyword id="KW-0997">Cell inner membrane</keyword>
<keyword id="KW-1003">Cell membrane</keyword>
<keyword id="KW-0444">Lipid biosynthesis</keyword>
<keyword id="KW-0443">Lipid metabolism</keyword>
<keyword id="KW-0472">Membrane</keyword>
<keyword id="KW-0594">Phospholipid biosynthesis</keyword>
<keyword id="KW-1208">Phospholipid metabolism</keyword>
<keyword id="KW-0808">Transferase</keyword>
<keyword id="KW-0812">Transmembrane</keyword>
<keyword id="KW-1133">Transmembrane helix</keyword>
<dbReference type="EC" id="2.7.8.5" evidence="1"/>
<dbReference type="EMBL" id="CP000247">
    <property type="protein sequence ID" value="ABG69853.1"/>
    <property type="molecule type" value="Genomic_DNA"/>
</dbReference>
<dbReference type="RefSeq" id="WP_001160187.1">
    <property type="nucleotide sequence ID" value="NC_008253.1"/>
</dbReference>
<dbReference type="SMR" id="Q0TGS6"/>
<dbReference type="GeneID" id="93776217"/>
<dbReference type="KEGG" id="ecp:ECP_1852"/>
<dbReference type="HOGENOM" id="CLU_051314_2_1_6"/>
<dbReference type="UniPathway" id="UPA00084">
    <property type="reaction ID" value="UER00503"/>
</dbReference>
<dbReference type="Proteomes" id="UP000009182">
    <property type="component" value="Chromosome"/>
</dbReference>
<dbReference type="GO" id="GO:0005886">
    <property type="term" value="C:plasma membrane"/>
    <property type="evidence" value="ECO:0007669"/>
    <property type="project" value="UniProtKB-SubCell"/>
</dbReference>
<dbReference type="GO" id="GO:0008444">
    <property type="term" value="F:CDP-diacylglycerol-glycerol-3-phosphate 3-phosphatidyltransferase activity"/>
    <property type="evidence" value="ECO:0007669"/>
    <property type="project" value="UniProtKB-UniRule"/>
</dbReference>
<dbReference type="GO" id="GO:0006655">
    <property type="term" value="P:phosphatidylglycerol biosynthetic process"/>
    <property type="evidence" value="ECO:0007669"/>
    <property type="project" value="UniProtKB-UniRule"/>
</dbReference>
<dbReference type="FunFam" id="1.20.120.1760:FF:000001">
    <property type="entry name" value="CDP-diacylglycerol--glycerol-3-phosphate 3-phosphatidyltransferase"/>
    <property type="match status" value="1"/>
</dbReference>
<dbReference type="Gene3D" id="1.20.120.1760">
    <property type="match status" value="1"/>
</dbReference>
<dbReference type="HAMAP" id="MF_01437">
    <property type="entry name" value="PgsA"/>
    <property type="match status" value="1"/>
</dbReference>
<dbReference type="InterPro" id="IPR050324">
    <property type="entry name" value="CDP-alcohol_PTase-I"/>
</dbReference>
<dbReference type="InterPro" id="IPR000462">
    <property type="entry name" value="CDP-OH_P_trans"/>
</dbReference>
<dbReference type="InterPro" id="IPR043130">
    <property type="entry name" value="CDP-OH_PTrfase_TM_dom"/>
</dbReference>
<dbReference type="InterPro" id="IPR048254">
    <property type="entry name" value="CDP_ALCOHOL_P_TRANSF_CS"/>
</dbReference>
<dbReference type="InterPro" id="IPR023762">
    <property type="entry name" value="PGP_synthase_bac"/>
</dbReference>
<dbReference type="InterPro" id="IPR004570">
    <property type="entry name" value="Phosphatidylglycerol_P_synth"/>
</dbReference>
<dbReference type="NCBIfam" id="TIGR00560">
    <property type="entry name" value="pgsA"/>
    <property type="match status" value="1"/>
</dbReference>
<dbReference type="NCBIfam" id="NF008090">
    <property type="entry name" value="PRK10832.1"/>
    <property type="match status" value="1"/>
</dbReference>
<dbReference type="PANTHER" id="PTHR14269:SF62">
    <property type="entry name" value="CDP-DIACYLGLYCEROL--GLYCEROL-3-PHOSPHATE 3-PHOSPHATIDYLTRANSFERASE 1, CHLOROPLASTIC"/>
    <property type="match status" value="1"/>
</dbReference>
<dbReference type="PANTHER" id="PTHR14269">
    <property type="entry name" value="CDP-DIACYLGLYCEROL--GLYCEROL-3-PHOSPHATE 3-PHOSPHATIDYLTRANSFERASE-RELATED"/>
    <property type="match status" value="1"/>
</dbReference>
<dbReference type="Pfam" id="PF01066">
    <property type="entry name" value="CDP-OH_P_transf"/>
    <property type="match status" value="1"/>
</dbReference>
<dbReference type="PIRSF" id="PIRSF000847">
    <property type="entry name" value="Phos_ph_gly_syn"/>
    <property type="match status" value="1"/>
</dbReference>
<dbReference type="PROSITE" id="PS00379">
    <property type="entry name" value="CDP_ALCOHOL_P_TRANSF"/>
    <property type="match status" value="1"/>
</dbReference>
<sequence>MQFNIPTLLTLFRVILIPFFVLVFYLPVTWSPFAAALIFCVAAVTDWFDGFLARRWNQSTRFGAFLDPVADKVLVAIAMVLVTEHYHSWWVTLPAATMIAREIIISALREWMAELGKRSSVAVSWIGKVKTTAQMVALAWLLWRPNIWVEYAGIALFFVAAVLTLWSMLQYLSAARADLLDQ</sequence>